<evidence type="ECO:0000250" key="1">
    <source>
        <dbReference type="UniProtKB" id="Q21A54"/>
    </source>
</evidence>
<evidence type="ECO:0000250" key="2">
    <source>
        <dbReference type="UniProtKB" id="Q9XDN5"/>
    </source>
</evidence>
<evidence type="ECO:0000305" key="3"/>
<comment type="function">
    <text evidence="2">Involved in 1,2-propanediol (1,2-PD) utilization within the bacterial microcompartment (BMC) dedicated to 1,2-PD degradation by catalyzing the conversion of propanoyl-CoA to propanoyl-phosphate.</text>
</comment>
<comment type="catalytic activity">
    <reaction evidence="2">
        <text>propanoyl-CoA + phosphate = propanoyl phosphate + CoA</text>
        <dbReference type="Rhea" id="RHEA:28046"/>
        <dbReference type="ChEBI" id="CHEBI:43474"/>
        <dbReference type="ChEBI" id="CHEBI:57287"/>
        <dbReference type="ChEBI" id="CHEBI:57392"/>
        <dbReference type="ChEBI" id="CHEBI:58933"/>
        <dbReference type="EC" id="2.3.1.222"/>
    </reaction>
</comment>
<comment type="cofactor">
    <cofactor evidence="1">
        <name>Zn(2+)</name>
        <dbReference type="ChEBI" id="CHEBI:29105"/>
    </cofactor>
    <text evidence="1">There are 2 Zn(2+) ions per monomer; Zn(2+) and CoA bind inbetween the 2 domains in each monomer.</text>
</comment>
<comment type="pathway">
    <text>Polyol metabolism; 1,2-propanediol degradation.</text>
</comment>
<comment type="subcellular location">
    <subcellularLocation>
        <location evidence="2">Bacterial microcompartment</location>
    </subcellularLocation>
</comment>
<comment type="domain">
    <text evidence="1">Formed by 2 beta-barrels, each is capped on both ends by short alpha-helices.</text>
</comment>
<comment type="similarity">
    <text evidence="3">Belongs to the PduL family.</text>
</comment>
<keyword id="KW-0012">Acyltransferase</keyword>
<keyword id="KW-1283">Bacterial microcompartment</keyword>
<keyword id="KW-0479">Metal-binding</keyword>
<keyword id="KW-1185">Reference proteome</keyword>
<keyword id="KW-0808">Transferase</keyword>
<keyword id="KW-0862">Zinc</keyword>
<dbReference type="EC" id="2.3.1.222"/>
<dbReference type="EMBL" id="CP001739">
    <property type="protein sequence ID" value="ACZ07914.1"/>
    <property type="molecule type" value="Genomic_DNA"/>
</dbReference>
<dbReference type="RefSeq" id="WP_012860510.1">
    <property type="nucleotide sequence ID" value="NC_013517.1"/>
</dbReference>
<dbReference type="SMR" id="D1AFM9"/>
<dbReference type="STRING" id="526218.Sterm_1046"/>
<dbReference type="KEGG" id="str:Sterm_1046"/>
<dbReference type="eggNOG" id="COG4869">
    <property type="taxonomic scope" value="Bacteria"/>
</dbReference>
<dbReference type="HOGENOM" id="CLU_080676_1_0_0"/>
<dbReference type="UniPathway" id="UPA00621"/>
<dbReference type="Proteomes" id="UP000000845">
    <property type="component" value="Chromosome"/>
</dbReference>
<dbReference type="GO" id="GO:0031469">
    <property type="term" value="C:bacterial microcompartment"/>
    <property type="evidence" value="ECO:0007669"/>
    <property type="project" value="UniProtKB-SubCell"/>
</dbReference>
<dbReference type="GO" id="GO:0016747">
    <property type="term" value="F:acyltransferase activity, transferring groups other than amino-acyl groups"/>
    <property type="evidence" value="ECO:0007669"/>
    <property type="project" value="InterPro"/>
</dbReference>
<dbReference type="GO" id="GO:0046872">
    <property type="term" value="F:metal ion binding"/>
    <property type="evidence" value="ECO:0007669"/>
    <property type="project" value="UniProtKB-KW"/>
</dbReference>
<dbReference type="GO" id="GO:0051144">
    <property type="term" value="P:propanediol catabolic process"/>
    <property type="evidence" value="ECO:0007669"/>
    <property type="project" value="UniProtKB-UniPathway"/>
</dbReference>
<dbReference type="InterPro" id="IPR008300">
    <property type="entry name" value="PTAC"/>
</dbReference>
<dbReference type="NCBIfam" id="NF040837">
    <property type="entry name" value="BMC_EutD_Gpos"/>
    <property type="match status" value="1"/>
</dbReference>
<dbReference type="NCBIfam" id="NF011652">
    <property type="entry name" value="PRK15070.1"/>
    <property type="match status" value="1"/>
</dbReference>
<dbReference type="PANTHER" id="PTHR39453">
    <property type="entry name" value="PHOSPHATE PROPANOYLTRANSFERASE"/>
    <property type="match status" value="1"/>
</dbReference>
<dbReference type="PANTHER" id="PTHR39453:SF1">
    <property type="entry name" value="PHOSPHATE PROPANOYLTRANSFERASE"/>
    <property type="match status" value="1"/>
</dbReference>
<dbReference type="Pfam" id="PF06130">
    <property type="entry name" value="PTAC"/>
    <property type="match status" value="1"/>
</dbReference>
<dbReference type="PIRSF" id="PIRSF010130">
    <property type="entry name" value="PduL"/>
    <property type="match status" value="1"/>
</dbReference>
<accession>D1AFM9</accession>
<reference key="1">
    <citation type="submission" date="2009-09" db="EMBL/GenBank/DDBJ databases">
        <title>The complete chromosome of Sebaldella termitidis ATCC 33386.</title>
        <authorList>
            <consortium name="US DOE Joint Genome Institute (JGI-PGF)"/>
            <person name="Lucas S."/>
            <person name="Copeland A."/>
            <person name="Lapidus A."/>
            <person name="Glavina del Rio T."/>
            <person name="Dalin E."/>
            <person name="Tice H."/>
            <person name="Bruce D."/>
            <person name="Goodwin L."/>
            <person name="Pitluck S."/>
            <person name="Kyrpides N."/>
            <person name="Mavromatis K."/>
            <person name="Ivanova N."/>
            <person name="Mikhailova N."/>
            <person name="Sims D."/>
            <person name="Meincke L."/>
            <person name="Brettin T."/>
            <person name="Detter J.C."/>
            <person name="Han C."/>
            <person name="Larimer F."/>
            <person name="Land M."/>
            <person name="Hauser L."/>
            <person name="Markowitz V."/>
            <person name="Cheng J.F."/>
            <person name="Hugenholtz P."/>
            <person name="Woyke T."/>
            <person name="Wu D."/>
            <person name="Eisen J.A."/>
        </authorList>
    </citation>
    <scope>NUCLEOTIDE SEQUENCE [LARGE SCALE GENOMIC DNA]</scope>
    <source>
        <strain>ATCC 33386 / NCTC 11300</strain>
    </source>
</reference>
<gene>
    <name type="primary">pduL</name>
    <name type="ordered locus">Sterm_1046</name>
</gene>
<proteinExistence type="inferred from homology"/>
<name>PDUL_SEBTE</name>
<feature type="chain" id="PRO_0000407711" description="Phosphate propanoyltransferase">
    <location>
        <begin position="1"/>
        <end position="211"/>
    </location>
</feature>
<feature type="binding site" evidence="1">
    <location>
        <begin position="29"/>
        <end position="31"/>
    </location>
    <ligand>
        <name>CoA</name>
        <dbReference type="ChEBI" id="CHEBI:57287"/>
    </ligand>
</feature>
<feature type="binding site" evidence="1">
    <location>
        <position position="33"/>
    </location>
    <ligand>
        <name>Zn(2+)</name>
        <dbReference type="ChEBI" id="CHEBI:29105"/>
        <label>1</label>
    </ligand>
</feature>
<feature type="binding site" evidence="1">
    <location>
        <position position="35"/>
    </location>
    <ligand>
        <name>Zn(2+)</name>
        <dbReference type="ChEBI" id="CHEBI:29105"/>
        <label>1</label>
    </ligand>
</feature>
<feature type="binding site" evidence="1">
    <location>
        <position position="75"/>
    </location>
    <ligand>
        <name>CoA</name>
        <dbReference type="ChEBI" id="CHEBI:57287"/>
    </ligand>
</feature>
<feature type="binding site" evidence="1">
    <location>
        <position position="88"/>
    </location>
    <ligand>
        <name>phosphate</name>
        <dbReference type="ChEBI" id="CHEBI:43474"/>
    </ligand>
</feature>
<feature type="binding site" evidence="1">
    <location>
        <position position="94"/>
    </location>
    <ligand>
        <name>Zn(2+)</name>
        <dbReference type="ChEBI" id="CHEBI:29105"/>
        <label>1</label>
    </ligand>
</feature>
<feature type="binding site" evidence="1">
    <location>
        <position position="142"/>
    </location>
    <ligand>
        <name>Zn(2+)</name>
        <dbReference type="ChEBI" id="CHEBI:29105"/>
        <label>2</label>
    </ligand>
</feature>
<feature type="binding site" evidence="1">
    <location>
        <position position="144"/>
    </location>
    <ligand>
        <name>Zn(2+)</name>
        <dbReference type="ChEBI" id="CHEBI:29105"/>
        <label>2</label>
    </ligand>
</feature>
<feature type="binding site" evidence="1">
    <location>
        <position position="189"/>
    </location>
    <ligand>
        <name>Zn(2+)</name>
        <dbReference type="ChEBI" id="CHEBI:29105"/>
        <label>2</label>
    </ligand>
</feature>
<feature type="binding site" evidence="1">
    <location>
        <position position="196"/>
    </location>
    <ligand>
        <name>CoA</name>
        <dbReference type="ChEBI" id="CHEBI:57287"/>
    </ligand>
</feature>
<organism>
    <name type="scientific">Sebaldella termitidis (strain ATCC 33386 / NCTC 11300)</name>
    <dbReference type="NCBI Taxonomy" id="526218"/>
    <lineage>
        <taxon>Bacteria</taxon>
        <taxon>Fusobacteriati</taxon>
        <taxon>Fusobacteriota</taxon>
        <taxon>Fusobacteriia</taxon>
        <taxon>Fusobacteriales</taxon>
        <taxon>Leptotrichiaceae</taxon>
        <taxon>Sebaldella</taxon>
    </lineage>
</organism>
<protein>
    <recommendedName>
        <fullName>Phosphate propanoyltransferase</fullName>
        <ecNumber>2.3.1.222</ecNumber>
    </recommendedName>
    <alternativeName>
        <fullName>Phosphate acyltransferase PduL</fullName>
    </alternativeName>
    <alternativeName>
        <fullName>Phosphotransacylase PduL</fullName>
        <shortName>PTAC</shortName>
    </alternativeName>
    <alternativeName>
        <fullName>Propanediol utilization protein PduL</fullName>
    </alternativeName>
</protein>
<sequence length="211" mass="23427">MDKIELEKIVREKIKEMLGDSGDEFMVEASGRHIHLSEEHMKHLFGEDYKLTPVKDLSQPGQYACKERVRVIGSKGEFSGVVILGPCRNETQIELSLTDCTTIGVKGVIRESGKIEGTPGILIGVGDKFVKIDKGVIVAQRHVHMTPEDAGRLGVKDGEIVKVRVNGRRPLIFDDVLIRVKDSYKLSMHIDYDEANACGFESGTTGSIYRK</sequence>